<keyword id="KW-0032">Aminotransferase</keyword>
<keyword id="KW-0963">Cytoplasm</keyword>
<keyword id="KW-0663">Pyridoxal phosphate</keyword>
<keyword id="KW-0808">Transferase</keyword>
<reference key="1">
    <citation type="journal article" date="2003" name="Mol. Microbiol.">
        <title>An integrated analysis of the genome of the hyperthermophilic archaeon Pyrococcus abyssi.</title>
        <authorList>
            <person name="Cohen G.N."/>
            <person name="Barbe V."/>
            <person name="Flament D."/>
            <person name="Galperin M."/>
            <person name="Heilig R."/>
            <person name="Lecompte O."/>
            <person name="Poch O."/>
            <person name="Prieur D."/>
            <person name="Querellou J."/>
            <person name="Ripp R."/>
            <person name="Thierry J.-C."/>
            <person name="Van der Oost J."/>
            <person name="Weissenbach J."/>
            <person name="Zivanovic Y."/>
            <person name="Forterre P."/>
        </authorList>
    </citation>
    <scope>NUCLEOTIDE SEQUENCE [LARGE SCALE GENOMIC DNA]</scope>
    <source>
        <strain>GE5 / Orsay</strain>
    </source>
</reference>
<reference key="2">
    <citation type="journal article" date="2012" name="Curr. Microbiol.">
        <title>Re-annotation of two hyperthermophilic archaea Pyrococcus abyssi GE5 and Pyrococcus furiosus DSM 3638.</title>
        <authorList>
            <person name="Gao J."/>
            <person name="Wang J."/>
        </authorList>
    </citation>
    <scope>GENOME REANNOTATION</scope>
    <source>
        <strain>GE5 / Orsay</strain>
    </source>
</reference>
<evidence type="ECO:0000250" key="1"/>
<evidence type="ECO:0000305" key="2"/>
<comment type="catalytic activity">
    <reaction>
        <text>L-aspartate + 2-oxoglutarate = oxaloacetate + L-glutamate</text>
        <dbReference type="Rhea" id="RHEA:21824"/>
        <dbReference type="ChEBI" id="CHEBI:16452"/>
        <dbReference type="ChEBI" id="CHEBI:16810"/>
        <dbReference type="ChEBI" id="CHEBI:29985"/>
        <dbReference type="ChEBI" id="CHEBI:29991"/>
        <dbReference type="EC" id="2.6.1.1"/>
    </reaction>
</comment>
<comment type="cofactor">
    <cofactor evidence="1">
        <name>pyridoxal 5'-phosphate</name>
        <dbReference type="ChEBI" id="CHEBI:597326"/>
    </cofactor>
</comment>
<comment type="subunit">
    <text evidence="1">Homodimer.</text>
</comment>
<comment type="subcellular location">
    <subcellularLocation>
        <location evidence="1">Cytoplasm</location>
    </subcellularLocation>
</comment>
<comment type="similarity">
    <text evidence="2">Belongs to the class-I pyridoxal-phosphate-dependent aminotransferase family.</text>
</comment>
<name>AAT_PYRAB</name>
<proteinExistence type="inferred from homology"/>
<accession>Q9V0L2</accession>
<accession>G8ZGX9</accession>
<organism>
    <name type="scientific">Pyrococcus abyssi (strain GE5 / Orsay)</name>
    <dbReference type="NCBI Taxonomy" id="272844"/>
    <lineage>
        <taxon>Archaea</taxon>
        <taxon>Methanobacteriati</taxon>
        <taxon>Methanobacteriota</taxon>
        <taxon>Thermococci</taxon>
        <taxon>Thermococcales</taxon>
        <taxon>Thermococcaceae</taxon>
        <taxon>Pyrococcus</taxon>
    </lineage>
</organism>
<gene>
    <name type="primary">aspC</name>
    <name type="ordered locus">PYRAB07770</name>
    <name type="ORF">PAB0525</name>
</gene>
<feature type="chain" id="PRO_0000123860" description="Aspartate aminotransferase">
    <location>
        <begin position="1"/>
        <end position="389"/>
    </location>
</feature>
<feature type="binding site" evidence="1">
    <location>
        <position position="34"/>
    </location>
    <ligand>
        <name>L-aspartate</name>
        <dbReference type="ChEBI" id="CHEBI:29991"/>
    </ligand>
</feature>
<feature type="binding site" evidence="1">
    <location>
        <position position="171"/>
    </location>
    <ligand>
        <name>L-aspartate</name>
        <dbReference type="ChEBI" id="CHEBI:29991"/>
    </ligand>
</feature>
<feature type="binding site" evidence="1">
    <location>
        <position position="362"/>
    </location>
    <ligand>
        <name>L-aspartate</name>
        <dbReference type="ChEBI" id="CHEBI:29991"/>
    </ligand>
</feature>
<feature type="modified residue" description="N6-(pyridoxal phosphate)lysine" evidence="1">
    <location>
        <position position="233"/>
    </location>
</feature>
<protein>
    <recommendedName>
        <fullName>Aspartate aminotransferase</fullName>
        <shortName>AspAT</shortName>
        <ecNumber>2.6.1.1</ecNumber>
    </recommendedName>
    <alternativeName>
        <fullName>Transaminase A</fullName>
    </alternativeName>
</protein>
<sequence length="389" mass="43923">MAMSDRLDLVNPSEIRKLFDIAAGMKDVISLGIGEPDFDTPQHIKEYAKEALDMGLTHYGPNIGLPELREAIAEKLKKQNNIEADPNKEIMVLVGANQAFLMGLSAFLKDGEEVLIPTPAFVSYAPAVILAGGKPVEVPTYEENEFRLNVDELKKYVTEKTKALIINSPCNPTGSVLKKKDLEEIADFAVEHDLIVISDEVYEHFIYDDVKHYSIASLDGMFERTITVNGFSKTFAMTGWRLGFVAAPSWIIEKMVKFQMYNATCPVTFIQYAAAKALRDERSWKAVEEMRKEYDRRRKLVWKRLNEMGLPTVKPKGAFYIFPRIKDTGLTSKEFSELMLMEAKVAVVPGSAFGKAGEGYVRISYATAYEKLEEAMDRMEKVLREKKLT</sequence>
<dbReference type="EC" id="2.6.1.1"/>
<dbReference type="EMBL" id="AJ248285">
    <property type="protein sequence ID" value="CAB49691.1"/>
    <property type="molecule type" value="Genomic_DNA"/>
</dbReference>
<dbReference type="EMBL" id="HE613800">
    <property type="protein sequence ID" value="CCE70174.1"/>
    <property type="molecule type" value="Genomic_DNA"/>
</dbReference>
<dbReference type="PIR" id="B75122">
    <property type="entry name" value="B75122"/>
</dbReference>
<dbReference type="RefSeq" id="WP_010867899.1">
    <property type="nucleotide sequence ID" value="NC_000868.1"/>
</dbReference>
<dbReference type="SMR" id="Q9V0L2"/>
<dbReference type="STRING" id="272844.PAB0525"/>
<dbReference type="KEGG" id="pab:PAB0525"/>
<dbReference type="PATRIC" id="fig|272844.11.peg.817"/>
<dbReference type="eggNOG" id="arCOG01130">
    <property type="taxonomic scope" value="Archaea"/>
</dbReference>
<dbReference type="HOGENOM" id="CLU_017584_4_3_2"/>
<dbReference type="OrthoDB" id="372018at2157"/>
<dbReference type="PhylomeDB" id="Q9V0L2"/>
<dbReference type="Proteomes" id="UP000000810">
    <property type="component" value="Chromosome"/>
</dbReference>
<dbReference type="Proteomes" id="UP000009139">
    <property type="component" value="Chromosome"/>
</dbReference>
<dbReference type="GO" id="GO:0005737">
    <property type="term" value="C:cytoplasm"/>
    <property type="evidence" value="ECO:0007669"/>
    <property type="project" value="UniProtKB-SubCell"/>
</dbReference>
<dbReference type="GO" id="GO:0004069">
    <property type="term" value="F:L-aspartate:2-oxoglutarate aminotransferase activity"/>
    <property type="evidence" value="ECO:0007669"/>
    <property type="project" value="UniProtKB-EC"/>
</dbReference>
<dbReference type="GO" id="GO:0030170">
    <property type="term" value="F:pyridoxal phosphate binding"/>
    <property type="evidence" value="ECO:0007669"/>
    <property type="project" value="InterPro"/>
</dbReference>
<dbReference type="GO" id="GO:0006520">
    <property type="term" value="P:amino acid metabolic process"/>
    <property type="evidence" value="ECO:0007669"/>
    <property type="project" value="InterPro"/>
</dbReference>
<dbReference type="GO" id="GO:0009058">
    <property type="term" value="P:biosynthetic process"/>
    <property type="evidence" value="ECO:0007669"/>
    <property type="project" value="InterPro"/>
</dbReference>
<dbReference type="CDD" id="cd00609">
    <property type="entry name" value="AAT_like"/>
    <property type="match status" value="1"/>
</dbReference>
<dbReference type="FunFam" id="3.40.640.10:FF:000033">
    <property type="entry name" value="Aspartate aminotransferase"/>
    <property type="match status" value="1"/>
</dbReference>
<dbReference type="Gene3D" id="3.90.1150.10">
    <property type="entry name" value="Aspartate Aminotransferase, domain 1"/>
    <property type="match status" value="1"/>
</dbReference>
<dbReference type="Gene3D" id="3.40.640.10">
    <property type="entry name" value="Type I PLP-dependent aspartate aminotransferase-like (Major domain)"/>
    <property type="match status" value="1"/>
</dbReference>
<dbReference type="InterPro" id="IPR004839">
    <property type="entry name" value="Aminotransferase_I/II_large"/>
</dbReference>
<dbReference type="InterPro" id="IPR050596">
    <property type="entry name" value="AspAT/PAT-like"/>
</dbReference>
<dbReference type="InterPro" id="IPR004838">
    <property type="entry name" value="NHTrfase_class1_PyrdxlP-BS"/>
</dbReference>
<dbReference type="InterPro" id="IPR015424">
    <property type="entry name" value="PyrdxlP-dep_Trfase"/>
</dbReference>
<dbReference type="InterPro" id="IPR015421">
    <property type="entry name" value="PyrdxlP-dep_Trfase_major"/>
</dbReference>
<dbReference type="InterPro" id="IPR015422">
    <property type="entry name" value="PyrdxlP-dep_Trfase_small"/>
</dbReference>
<dbReference type="PANTHER" id="PTHR46383">
    <property type="entry name" value="ASPARTATE AMINOTRANSFERASE"/>
    <property type="match status" value="1"/>
</dbReference>
<dbReference type="PANTHER" id="PTHR46383:SF3">
    <property type="entry name" value="ASPARTATE AMINOTRANSFERASE-RELATED"/>
    <property type="match status" value="1"/>
</dbReference>
<dbReference type="Pfam" id="PF00155">
    <property type="entry name" value="Aminotran_1_2"/>
    <property type="match status" value="1"/>
</dbReference>
<dbReference type="SUPFAM" id="SSF53383">
    <property type="entry name" value="PLP-dependent transferases"/>
    <property type="match status" value="1"/>
</dbReference>
<dbReference type="PROSITE" id="PS00105">
    <property type="entry name" value="AA_TRANSFER_CLASS_1"/>
    <property type="match status" value="1"/>
</dbReference>